<dbReference type="EMBL" id="CP000029">
    <property type="protein sequence ID" value="AAW54824.1"/>
    <property type="status" value="ALT_INIT"/>
    <property type="molecule type" value="Genomic_DNA"/>
</dbReference>
<dbReference type="RefSeq" id="WP_001829999.1">
    <property type="nucleotide sequence ID" value="NC_002976.3"/>
</dbReference>
<dbReference type="SMR" id="Q5HMY2"/>
<dbReference type="STRING" id="176279.SERP1493"/>
<dbReference type="KEGG" id="ser:SERP1493"/>
<dbReference type="eggNOG" id="COG3279">
    <property type="taxonomic scope" value="Bacteria"/>
</dbReference>
<dbReference type="HOGENOM" id="CLU_000445_14_6_9"/>
<dbReference type="Proteomes" id="UP000000531">
    <property type="component" value="Chromosome"/>
</dbReference>
<dbReference type="GO" id="GO:0005737">
    <property type="term" value="C:cytoplasm"/>
    <property type="evidence" value="ECO:0007669"/>
    <property type="project" value="UniProtKB-SubCell"/>
</dbReference>
<dbReference type="GO" id="GO:0003677">
    <property type="term" value="F:DNA binding"/>
    <property type="evidence" value="ECO:0007669"/>
    <property type="project" value="UniProtKB-KW"/>
</dbReference>
<dbReference type="GO" id="GO:0000156">
    <property type="term" value="F:phosphorelay response regulator activity"/>
    <property type="evidence" value="ECO:0007669"/>
    <property type="project" value="InterPro"/>
</dbReference>
<dbReference type="CDD" id="cd17533">
    <property type="entry name" value="REC_LytTR_AgrA-like"/>
    <property type="match status" value="1"/>
</dbReference>
<dbReference type="FunFam" id="2.40.50.1020:FF:000005">
    <property type="entry name" value="Accessory gene regulator A"/>
    <property type="match status" value="1"/>
</dbReference>
<dbReference type="Gene3D" id="3.40.50.2300">
    <property type="match status" value="1"/>
</dbReference>
<dbReference type="Gene3D" id="2.40.50.1020">
    <property type="entry name" value="LytTr DNA-binding domain"/>
    <property type="match status" value="1"/>
</dbReference>
<dbReference type="InterPro" id="IPR011006">
    <property type="entry name" value="CheY-like_superfamily"/>
</dbReference>
<dbReference type="InterPro" id="IPR046947">
    <property type="entry name" value="LytR-like"/>
</dbReference>
<dbReference type="InterPro" id="IPR007492">
    <property type="entry name" value="LytTR_DNA-bd_dom"/>
</dbReference>
<dbReference type="InterPro" id="IPR001789">
    <property type="entry name" value="Sig_transdc_resp-reg_receiver"/>
</dbReference>
<dbReference type="NCBIfam" id="NF046049">
    <property type="entry name" value="quorum_RR_AgrA"/>
    <property type="match status" value="1"/>
</dbReference>
<dbReference type="PANTHER" id="PTHR37299:SF3">
    <property type="entry name" value="STAGE 0 SPORULATION PROTEIN A HOMOLOG"/>
    <property type="match status" value="1"/>
</dbReference>
<dbReference type="PANTHER" id="PTHR37299">
    <property type="entry name" value="TRANSCRIPTIONAL REGULATOR-RELATED"/>
    <property type="match status" value="1"/>
</dbReference>
<dbReference type="Pfam" id="PF04397">
    <property type="entry name" value="LytTR"/>
    <property type="match status" value="1"/>
</dbReference>
<dbReference type="Pfam" id="PF00072">
    <property type="entry name" value="Response_reg"/>
    <property type="match status" value="1"/>
</dbReference>
<dbReference type="SMART" id="SM00850">
    <property type="entry name" value="LytTR"/>
    <property type="match status" value="1"/>
</dbReference>
<dbReference type="SMART" id="SM00448">
    <property type="entry name" value="REC"/>
    <property type="match status" value="1"/>
</dbReference>
<dbReference type="SUPFAM" id="SSF52172">
    <property type="entry name" value="CheY-like"/>
    <property type="match status" value="1"/>
</dbReference>
<dbReference type="PROSITE" id="PS50930">
    <property type="entry name" value="HTH_LYTTR"/>
    <property type="match status" value="1"/>
</dbReference>
<dbReference type="PROSITE" id="PS50110">
    <property type="entry name" value="RESPONSE_REGULATORY"/>
    <property type="match status" value="1"/>
</dbReference>
<gene>
    <name type="primary">agrA</name>
    <name type="ordered locus">SERP1493</name>
</gene>
<accession>Q5HMY2</accession>
<feature type="chain" id="PRO_0000081003" description="Accessory gene regulator protein A">
    <location>
        <begin position="1"/>
        <end position="238"/>
    </location>
</feature>
<feature type="domain" description="Response regulatory" evidence="3">
    <location>
        <begin position="2"/>
        <end position="125"/>
    </location>
</feature>
<feature type="domain" description="HTH LytTR-type" evidence="2">
    <location>
        <begin position="143"/>
        <end position="238"/>
    </location>
</feature>
<feature type="modified residue" description="4-aspartylphosphate" evidence="3">
    <location>
        <position position="59"/>
    </location>
</feature>
<organism>
    <name type="scientific">Staphylococcus epidermidis (strain ATCC 35984 / DSM 28319 / BCRC 17069 / CCUG 31568 / BM 3577 / RP62A)</name>
    <dbReference type="NCBI Taxonomy" id="176279"/>
    <lineage>
        <taxon>Bacteria</taxon>
        <taxon>Bacillati</taxon>
        <taxon>Bacillota</taxon>
        <taxon>Bacilli</taxon>
        <taxon>Bacillales</taxon>
        <taxon>Staphylococcaceae</taxon>
        <taxon>Staphylococcus</taxon>
    </lineage>
</organism>
<proteinExistence type="inferred from homology"/>
<evidence type="ECO:0000250" key="1"/>
<evidence type="ECO:0000255" key="2">
    <source>
        <dbReference type="PROSITE-ProRule" id="PRU00112"/>
    </source>
</evidence>
<evidence type="ECO:0000255" key="3">
    <source>
        <dbReference type="PROSITE-ProRule" id="PRU00169"/>
    </source>
</evidence>
<evidence type="ECO:0000305" key="4"/>
<keyword id="KW-0010">Activator</keyword>
<keyword id="KW-0963">Cytoplasm</keyword>
<keyword id="KW-0238">DNA-binding</keyword>
<keyword id="KW-0597">Phosphoprotein</keyword>
<keyword id="KW-1185">Reference proteome</keyword>
<keyword id="KW-0804">Transcription</keyword>
<keyword id="KW-0805">Transcription regulation</keyword>
<keyword id="KW-0902">Two-component regulatory system</keyword>
<reference key="1">
    <citation type="journal article" date="2005" name="J. Bacteriol.">
        <title>Insights on evolution of virulence and resistance from the complete genome analysis of an early methicillin-resistant Staphylococcus aureus strain and a biofilm-producing methicillin-resistant Staphylococcus epidermidis strain.</title>
        <authorList>
            <person name="Gill S.R."/>
            <person name="Fouts D.E."/>
            <person name="Archer G.L."/>
            <person name="Mongodin E.F."/>
            <person name="DeBoy R.T."/>
            <person name="Ravel J."/>
            <person name="Paulsen I.T."/>
            <person name="Kolonay J.F."/>
            <person name="Brinkac L.M."/>
            <person name="Beanan M.J."/>
            <person name="Dodson R.J."/>
            <person name="Daugherty S.C."/>
            <person name="Madupu R."/>
            <person name="Angiuoli S.V."/>
            <person name="Durkin A.S."/>
            <person name="Haft D.H."/>
            <person name="Vamathevan J.J."/>
            <person name="Khouri H."/>
            <person name="Utterback T.R."/>
            <person name="Lee C."/>
            <person name="Dimitrov G."/>
            <person name="Jiang L."/>
            <person name="Qin H."/>
            <person name="Weidman J."/>
            <person name="Tran K."/>
            <person name="Kang K.H."/>
            <person name="Hance I.R."/>
            <person name="Nelson K.E."/>
            <person name="Fraser C.M."/>
        </authorList>
    </citation>
    <scope>NUCLEOTIDE SEQUENCE [LARGE SCALE GENOMIC DNA]</scope>
    <source>
        <strain>ATCC 35984 / DSM 28319 / BCRC 17069 / CCUG 31568 / BM 3577 / RP62A</strain>
    </source>
</reference>
<sequence length="238" mass="27937">MKIFVCEDDQRQREHMVSIIKNYIMIEEKPMELALATNDPYEVLEQSKELNDIGCYFLDIQLEADMNGIKLASEIRKHDPVGNIIFVTSHSELTYLTFVYKVAAMDFIFKDDPSELKMRIIDCLETAHTRLKLLSKESNVDTIELKRGSNSVYVQYDDIMFFESSTKSHRLIAHLDNRQIEFYGNLKELAQLDERFFRCHNSFVINRHNIESIDSKERIVYFKNGENCFASVRNVKKI</sequence>
<protein>
    <recommendedName>
        <fullName>Accessory gene regulator protein A</fullName>
    </recommendedName>
</protein>
<name>AGRA_STAEQ</name>
<comment type="function">
    <text evidence="1">Required for high-level post-exponential phase expression of a series of secreted proteins.</text>
</comment>
<comment type="subcellular location">
    <subcellularLocation>
        <location evidence="1">Cytoplasm</location>
    </subcellularLocation>
</comment>
<comment type="sequence caution" evidence="4">
    <conflict type="erroneous initiation">
        <sequence resource="EMBL-CDS" id="AAW54824"/>
    </conflict>
</comment>